<feature type="chain" id="PRO_0000228194" description="Translation initiation factor IF-2">
    <location>
        <begin position="1"/>
        <end position="848"/>
    </location>
</feature>
<feature type="domain" description="tr-type G">
    <location>
        <begin position="346"/>
        <end position="516"/>
    </location>
</feature>
<feature type="region of interest" description="Disordered" evidence="3">
    <location>
        <begin position="1"/>
        <end position="20"/>
    </location>
</feature>
<feature type="region of interest" description="G1" evidence="1">
    <location>
        <begin position="355"/>
        <end position="362"/>
    </location>
</feature>
<feature type="region of interest" description="G2" evidence="1">
    <location>
        <begin position="380"/>
        <end position="384"/>
    </location>
</feature>
<feature type="region of interest" description="G3" evidence="1">
    <location>
        <begin position="402"/>
        <end position="405"/>
    </location>
</feature>
<feature type="region of interest" description="G4" evidence="1">
    <location>
        <begin position="456"/>
        <end position="459"/>
    </location>
</feature>
<feature type="region of interest" description="G5" evidence="1">
    <location>
        <begin position="492"/>
        <end position="494"/>
    </location>
</feature>
<feature type="binding site" evidence="2">
    <location>
        <begin position="355"/>
        <end position="362"/>
    </location>
    <ligand>
        <name>GTP</name>
        <dbReference type="ChEBI" id="CHEBI:37565"/>
    </ligand>
</feature>
<feature type="binding site" evidence="2">
    <location>
        <begin position="402"/>
        <end position="406"/>
    </location>
    <ligand>
        <name>GTP</name>
        <dbReference type="ChEBI" id="CHEBI:37565"/>
    </ligand>
</feature>
<feature type="binding site" evidence="2">
    <location>
        <begin position="456"/>
        <end position="459"/>
    </location>
    <ligand>
        <name>GTP</name>
        <dbReference type="ChEBI" id="CHEBI:37565"/>
    </ligand>
</feature>
<proteinExistence type="inferred from homology"/>
<dbReference type="EMBL" id="CP000107">
    <property type="protein sequence ID" value="AAZ68504.1"/>
    <property type="molecule type" value="Genomic_DNA"/>
</dbReference>
<dbReference type="RefSeq" id="WP_011304582.1">
    <property type="nucleotide sequence ID" value="NC_007354.1"/>
</dbReference>
<dbReference type="SMR" id="Q3YS01"/>
<dbReference type="FunCoup" id="Q3YS01">
    <property type="interactions" value="339"/>
</dbReference>
<dbReference type="STRING" id="269484.Ecaj_0467"/>
<dbReference type="KEGG" id="ecn:Ecaj_0467"/>
<dbReference type="eggNOG" id="COG0532">
    <property type="taxonomic scope" value="Bacteria"/>
</dbReference>
<dbReference type="HOGENOM" id="CLU_006301_10_2_5"/>
<dbReference type="InParanoid" id="Q3YS01"/>
<dbReference type="Proteomes" id="UP000000435">
    <property type="component" value="Chromosome"/>
</dbReference>
<dbReference type="GO" id="GO:0005737">
    <property type="term" value="C:cytoplasm"/>
    <property type="evidence" value="ECO:0007669"/>
    <property type="project" value="UniProtKB-SubCell"/>
</dbReference>
<dbReference type="GO" id="GO:0005525">
    <property type="term" value="F:GTP binding"/>
    <property type="evidence" value="ECO:0007669"/>
    <property type="project" value="UniProtKB-KW"/>
</dbReference>
<dbReference type="GO" id="GO:0003924">
    <property type="term" value="F:GTPase activity"/>
    <property type="evidence" value="ECO:0007669"/>
    <property type="project" value="UniProtKB-UniRule"/>
</dbReference>
<dbReference type="GO" id="GO:0003743">
    <property type="term" value="F:translation initiation factor activity"/>
    <property type="evidence" value="ECO:0007669"/>
    <property type="project" value="UniProtKB-UniRule"/>
</dbReference>
<dbReference type="CDD" id="cd01887">
    <property type="entry name" value="IF2_eIF5B"/>
    <property type="match status" value="1"/>
</dbReference>
<dbReference type="CDD" id="cd03702">
    <property type="entry name" value="IF2_mtIF2_II"/>
    <property type="match status" value="1"/>
</dbReference>
<dbReference type="CDD" id="cd03692">
    <property type="entry name" value="mtIF2_IVc"/>
    <property type="match status" value="1"/>
</dbReference>
<dbReference type="FunFam" id="2.40.30.10:FF:000008">
    <property type="entry name" value="Translation initiation factor IF-2"/>
    <property type="match status" value="1"/>
</dbReference>
<dbReference type="FunFam" id="2.40.30.10:FF:000054">
    <property type="entry name" value="Translation initiation factor IF-2"/>
    <property type="match status" value="1"/>
</dbReference>
<dbReference type="FunFam" id="3.40.50.10050:FF:000001">
    <property type="entry name" value="Translation initiation factor IF-2"/>
    <property type="match status" value="1"/>
</dbReference>
<dbReference type="FunFam" id="3.40.50.300:FF:000019">
    <property type="entry name" value="Translation initiation factor IF-2"/>
    <property type="match status" value="1"/>
</dbReference>
<dbReference type="Gene3D" id="3.40.50.300">
    <property type="entry name" value="P-loop containing nucleotide triphosphate hydrolases"/>
    <property type="match status" value="1"/>
</dbReference>
<dbReference type="Gene3D" id="2.40.30.10">
    <property type="entry name" value="Translation factors"/>
    <property type="match status" value="2"/>
</dbReference>
<dbReference type="Gene3D" id="3.40.50.10050">
    <property type="entry name" value="Translation initiation factor IF- 2, domain 3"/>
    <property type="match status" value="1"/>
</dbReference>
<dbReference type="HAMAP" id="MF_00100_B">
    <property type="entry name" value="IF_2_B"/>
    <property type="match status" value="1"/>
</dbReference>
<dbReference type="InterPro" id="IPR053905">
    <property type="entry name" value="EF-G-like_DII"/>
</dbReference>
<dbReference type="InterPro" id="IPR044145">
    <property type="entry name" value="IF2_II"/>
</dbReference>
<dbReference type="InterPro" id="IPR006847">
    <property type="entry name" value="IF2_N"/>
</dbReference>
<dbReference type="InterPro" id="IPR027417">
    <property type="entry name" value="P-loop_NTPase"/>
</dbReference>
<dbReference type="InterPro" id="IPR005225">
    <property type="entry name" value="Small_GTP-bd"/>
</dbReference>
<dbReference type="InterPro" id="IPR000795">
    <property type="entry name" value="T_Tr_GTP-bd_dom"/>
</dbReference>
<dbReference type="InterPro" id="IPR000178">
    <property type="entry name" value="TF_IF2_bacterial-like"/>
</dbReference>
<dbReference type="InterPro" id="IPR015760">
    <property type="entry name" value="TIF_IF2"/>
</dbReference>
<dbReference type="InterPro" id="IPR023115">
    <property type="entry name" value="TIF_IF2_dom3"/>
</dbReference>
<dbReference type="InterPro" id="IPR036925">
    <property type="entry name" value="TIF_IF2_dom3_sf"/>
</dbReference>
<dbReference type="InterPro" id="IPR009000">
    <property type="entry name" value="Transl_B-barrel_sf"/>
</dbReference>
<dbReference type="NCBIfam" id="TIGR00487">
    <property type="entry name" value="IF-2"/>
    <property type="match status" value="1"/>
</dbReference>
<dbReference type="NCBIfam" id="TIGR00231">
    <property type="entry name" value="small_GTP"/>
    <property type="match status" value="1"/>
</dbReference>
<dbReference type="PANTHER" id="PTHR43381:SF5">
    <property type="entry name" value="TR-TYPE G DOMAIN-CONTAINING PROTEIN"/>
    <property type="match status" value="1"/>
</dbReference>
<dbReference type="PANTHER" id="PTHR43381">
    <property type="entry name" value="TRANSLATION INITIATION FACTOR IF-2-RELATED"/>
    <property type="match status" value="1"/>
</dbReference>
<dbReference type="Pfam" id="PF22042">
    <property type="entry name" value="EF-G_D2"/>
    <property type="match status" value="1"/>
</dbReference>
<dbReference type="Pfam" id="PF00009">
    <property type="entry name" value="GTP_EFTU"/>
    <property type="match status" value="1"/>
</dbReference>
<dbReference type="Pfam" id="PF11987">
    <property type="entry name" value="IF-2"/>
    <property type="match status" value="1"/>
</dbReference>
<dbReference type="Pfam" id="PF04760">
    <property type="entry name" value="IF2_N"/>
    <property type="match status" value="1"/>
</dbReference>
<dbReference type="SUPFAM" id="SSF52156">
    <property type="entry name" value="Initiation factor IF2/eIF5b, domain 3"/>
    <property type="match status" value="1"/>
</dbReference>
<dbReference type="SUPFAM" id="SSF52540">
    <property type="entry name" value="P-loop containing nucleoside triphosphate hydrolases"/>
    <property type="match status" value="1"/>
</dbReference>
<dbReference type="SUPFAM" id="SSF50447">
    <property type="entry name" value="Translation proteins"/>
    <property type="match status" value="2"/>
</dbReference>
<dbReference type="PROSITE" id="PS51722">
    <property type="entry name" value="G_TR_2"/>
    <property type="match status" value="1"/>
</dbReference>
<dbReference type="PROSITE" id="PS01176">
    <property type="entry name" value="IF2"/>
    <property type="match status" value="1"/>
</dbReference>
<name>IF2_EHRCJ</name>
<organism>
    <name type="scientific">Ehrlichia canis (strain Jake)</name>
    <dbReference type="NCBI Taxonomy" id="269484"/>
    <lineage>
        <taxon>Bacteria</taxon>
        <taxon>Pseudomonadati</taxon>
        <taxon>Pseudomonadota</taxon>
        <taxon>Alphaproteobacteria</taxon>
        <taxon>Rickettsiales</taxon>
        <taxon>Anaplasmataceae</taxon>
        <taxon>Ehrlichia</taxon>
    </lineage>
</organism>
<evidence type="ECO:0000250" key="1"/>
<evidence type="ECO:0000255" key="2">
    <source>
        <dbReference type="HAMAP-Rule" id="MF_00100"/>
    </source>
</evidence>
<evidence type="ECO:0000256" key="3">
    <source>
        <dbReference type="SAM" id="MobiDB-lite"/>
    </source>
</evidence>
<comment type="function">
    <text evidence="2">One of the essential components for the initiation of protein synthesis. Protects formylmethionyl-tRNA from spontaneous hydrolysis and promotes its binding to the 30S ribosomal subunits. Also involved in the hydrolysis of GTP during the formation of the 70S ribosomal complex.</text>
</comment>
<comment type="subcellular location">
    <subcellularLocation>
        <location evidence="2">Cytoplasm</location>
    </subcellularLocation>
</comment>
<comment type="similarity">
    <text evidence="2">Belongs to the TRAFAC class translation factor GTPase superfamily. Classic translation factor GTPase family. IF-2 subfamily.</text>
</comment>
<sequence>MNESKGAVDSGLMSGKTERTTLKLSDKLKLSSSIQQNTKFALNKSITTVEVRKSKKRRDIDNIEQASVVLQNDNVYQSDGDNNTLTIQEQISRMNALQNANIHEKKEEVSDDQTDKKEEVTNAETVGLLPVEENVNTDLVIEEGHSEKVEEVIEESVIEDQPNLEHLDVIEEKNGPNQSGDQNVDNSIVDLLQSKAVEEKKLKKYEKEHEEKKGNPKKGVSNHMYSKHVKLVIEEELEDNNKQIIQTHKTRKNRSVSSIKNKITRKVLIPKKITVQELASNMSERVKDVQNMLFQMGRRDIKPNDFLDSDQAAIIVEAFNHTFKLVNDGKLEDDLYSDGNDKELLPRAPVVTVMGHVDHGKTSLLDAIRESNVADGEFKGITQHIGAYQIILDGDKRITFIDTPGHEAFTAMRACGTNVTDIVVLVVAADDGIMPQTIESINHVKAANVAMIVAVNKIDKHDANLDKITNSLLNHGVVAESLGGDVIVVPVSAKEKINLDQLKSSILLMAELLELKAIYNTRASGVVIESKIDKNCGVVATLIVQKGTLKSGDIIVVGHNSYGKVRNMFNSDGRSQKVAIPSMPVKVLGLNNVPNSGSSFIVVDSEKQARELINYRQELFNASLEENAKSKMDASNILACDVVDELNVILKCDVMGSVEAICYSISKITHEDIKLNVLYKGVGNVTKSDVLLAETSNSIILAFNVKADAQVKELAKQRCVEINHYSVIYDIIDDVKRILSSMLKPLQQEVQVGALAIRKVFSSGNAGSVLGCYVTSGVVKKGSLVKLIRNNTIIHEGKIKVLRRFKDDVKEVSSGFECGILLDYSKEIYPESDIINVLEVIEEVRVIK</sequence>
<gene>
    <name evidence="2" type="primary">infB</name>
    <name type="ordered locus">Ecaj_0467</name>
</gene>
<protein>
    <recommendedName>
        <fullName evidence="2">Translation initiation factor IF-2</fullName>
    </recommendedName>
</protein>
<reference key="1">
    <citation type="journal article" date="2006" name="J. Bacteriol.">
        <title>The genome of the obligately intracellular bacterium Ehrlichia canis reveals themes of complex membrane structure and immune evasion strategies.</title>
        <authorList>
            <person name="Mavromatis K."/>
            <person name="Doyle C.K."/>
            <person name="Lykidis A."/>
            <person name="Ivanova N."/>
            <person name="Francino M.P."/>
            <person name="Chain P."/>
            <person name="Shin M."/>
            <person name="Malfatti S."/>
            <person name="Larimer F."/>
            <person name="Copeland A."/>
            <person name="Detter J.C."/>
            <person name="Land M."/>
            <person name="Richardson P.M."/>
            <person name="Yu X.J."/>
            <person name="Walker D.H."/>
            <person name="McBride J.W."/>
            <person name="Kyrpides N.C."/>
        </authorList>
    </citation>
    <scope>NUCLEOTIDE SEQUENCE [LARGE SCALE GENOMIC DNA]</scope>
    <source>
        <strain>Jake</strain>
    </source>
</reference>
<accession>Q3YS01</accession>
<keyword id="KW-0963">Cytoplasm</keyword>
<keyword id="KW-0342">GTP-binding</keyword>
<keyword id="KW-0396">Initiation factor</keyword>
<keyword id="KW-0547">Nucleotide-binding</keyword>
<keyword id="KW-0648">Protein biosynthesis</keyword>